<sequence length="181" mass="19454">MRHNNAGKRLGRTTSHRIAMYRNMVTSFLNHERITTTDAKAKGLRSIAEKMITLGKKGDLNAMRQAASFIRDKKVVTKLFTTIAPRYAERAGGYTRIIKLGIRPGDNAPLSVIELVEETIQAPKAKKKIAAKKPATKVAAKAASATAESAPVATANDAAPAEEAEVQGVKDPAEDCEAKAD</sequence>
<gene>
    <name evidence="1" type="primary">rplQ</name>
    <name type="ordered locus">Geob_3598</name>
</gene>
<comment type="subunit">
    <text evidence="1">Part of the 50S ribosomal subunit. Contacts protein L32.</text>
</comment>
<comment type="similarity">
    <text evidence="1">Belongs to the bacterial ribosomal protein bL17 family.</text>
</comment>
<proteinExistence type="inferred from homology"/>
<evidence type="ECO:0000255" key="1">
    <source>
        <dbReference type="HAMAP-Rule" id="MF_01368"/>
    </source>
</evidence>
<evidence type="ECO:0000256" key="2">
    <source>
        <dbReference type="SAM" id="MobiDB-lite"/>
    </source>
</evidence>
<evidence type="ECO:0000305" key="3"/>
<reference key="1">
    <citation type="submission" date="2009-01" db="EMBL/GenBank/DDBJ databases">
        <title>Complete sequence of Geobacter sp. FRC-32.</title>
        <authorList>
            <consortium name="US DOE Joint Genome Institute"/>
            <person name="Lucas S."/>
            <person name="Copeland A."/>
            <person name="Lapidus A."/>
            <person name="Glavina del Rio T."/>
            <person name="Dalin E."/>
            <person name="Tice H."/>
            <person name="Bruce D."/>
            <person name="Goodwin L."/>
            <person name="Pitluck S."/>
            <person name="Saunders E."/>
            <person name="Brettin T."/>
            <person name="Detter J.C."/>
            <person name="Han C."/>
            <person name="Larimer F."/>
            <person name="Land M."/>
            <person name="Hauser L."/>
            <person name="Kyrpides N."/>
            <person name="Ovchinnikova G."/>
            <person name="Kostka J."/>
            <person name="Richardson P."/>
        </authorList>
    </citation>
    <scope>NUCLEOTIDE SEQUENCE [LARGE SCALE GENOMIC DNA]</scope>
    <source>
        <strain>DSM 22248 / JCM 15807 / FRC-32</strain>
    </source>
</reference>
<keyword id="KW-1185">Reference proteome</keyword>
<keyword id="KW-0687">Ribonucleoprotein</keyword>
<keyword id="KW-0689">Ribosomal protein</keyword>
<feature type="chain" id="PRO_1000184024" description="Large ribosomal subunit protein bL17">
    <location>
        <begin position="1"/>
        <end position="181"/>
    </location>
</feature>
<feature type="region of interest" description="Disordered" evidence="2">
    <location>
        <begin position="141"/>
        <end position="181"/>
    </location>
</feature>
<feature type="compositionally biased region" description="Low complexity" evidence="2">
    <location>
        <begin position="141"/>
        <end position="159"/>
    </location>
</feature>
<feature type="compositionally biased region" description="Basic and acidic residues" evidence="2">
    <location>
        <begin position="171"/>
        <end position="181"/>
    </location>
</feature>
<dbReference type="EMBL" id="CP001390">
    <property type="protein sequence ID" value="ACM21939.1"/>
    <property type="molecule type" value="Genomic_DNA"/>
</dbReference>
<dbReference type="RefSeq" id="WP_012648667.1">
    <property type="nucleotide sequence ID" value="NC_011979.1"/>
</dbReference>
<dbReference type="SMR" id="B9M6F1"/>
<dbReference type="STRING" id="316067.Geob_3598"/>
<dbReference type="KEGG" id="geo:Geob_3598"/>
<dbReference type="eggNOG" id="COG0203">
    <property type="taxonomic scope" value="Bacteria"/>
</dbReference>
<dbReference type="HOGENOM" id="CLU_074407_0_1_7"/>
<dbReference type="OrthoDB" id="9809073at2"/>
<dbReference type="Proteomes" id="UP000007721">
    <property type="component" value="Chromosome"/>
</dbReference>
<dbReference type="GO" id="GO:0022625">
    <property type="term" value="C:cytosolic large ribosomal subunit"/>
    <property type="evidence" value="ECO:0007669"/>
    <property type="project" value="TreeGrafter"/>
</dbReference>
<dbReference type="GO" id="GO:0003735">
    <property type="term" value="F:structural constituent of ribosome"/>
    <property type="evidence" value="ECO:0007669"/>
    <property type="project" value="InterPro"/>
</dbReference>
<dbReference type="GO" id="GO:0006412">
    <property type="term" value="P:translation"/>
    <property type="evidence" value="ECO:0007669"/>
    <property type="project" value="UniProtKB-UniRule"/>
</dbReference>
<dbReference type="FunFam" id="3.90.1030.10:FF:000001">
    <property type="entry name" value="50S ribosomal protein L17"/>
    <property type="match status" value="1"/>
</dbReference>
<dbReference type="Gene3D" id="3.90.1030.10">
    <property type="entry name" value="Ribosomal protein L17"/>
    <property type="match status" value="1"/>
</dbReference>
<dbReference type="HAMAP" id="MF_01368">
    <property type="entry name" value="Ribosomal_bL17"/>
    <property type="match status" value="1"/>
</dbReference>
<dbReference type="InterPro" id="IPR000456">
    <property type="entry name" value="Ribosomal_bL17"/>
</dbReference>
<dbReference type="InterPro" id="IPR047859">
    <property type="entry name" value="Ribosomal_bL17_CS"/>
</dbReference>
<dbReference type="InterPro" id="IPR036373">
    <property type="entry name" value="Ribosomal_bL17_sf"/>
</dbReference>
<dbReference type="NCBIfam" id="TIGR00059">
    <property type="entry name" value="L17"/>
    <property type="match status" value="1"/>
</dbReference>
<dbReference type="PANTHER" id="PTHR14413:SF16">
    <property type="entry name" value="LARGE RIBOSOMAL SUBUNIT PROTEIN BL17M"/>
    <property type="match status" value="1"/>
</dbReference>
<dbReference type="PANTHER" id="PTHR14413">
    <property type="entry name" value="RIBOSOMAL PROTEIN L17"/>
    <property type="match status" value="1"/>
</dbReference>
<dbReference type="Pfam" id="PF01196">
    <property type="entry name" value="Ribosomal_L17"/>
    <property type="match status" value="1"/>
</dbReference>
<dbReference type="SUPFAM" id="SSF64263">
    <property type="entry name" value="Prokaryotic ribosomal protein L17"/>
    <property type="match status" value="1"/>
</dbReference>
<dbReference type="PROSITE" id="PS01167">
    <property type="entry name" value="RIBOSOMAL_L17"/>
    <property type="match status" value="1"/>
</dbReference>
<organism>
    <name type="scientific">Geotalea daltonii (strain DSM 22248 / JCM 15807 / FRC-32)</name>
    <name type="common">Geobacter daltonii</name>
    <dbReference type="NCBI Taxonomy" id="316067"/>
    <lineage>
        <taxon>Bacteria</taxon>
        <taxon>Pseudomonadati</taxon>
        <taxon>Thermodesulfobacteriota</taxon>
        <taxon>Desulfuromonadia</taxon>
        <taxon>Geobacterales</taxon>
        <taxon>Geobacteraceae</taxon>
        <taxon>Geotalea</taxon>
    </lineage>
</organism>
<accession>B9M6F1</accession>
<name>RL17_GEODF</name>
<protein>
    <recommendedName>
        <fullName evidence="1">Large ribosomal subunit protein bL17</fullName>
    </recommendedName>
    <alternativeName>
        <fullName evidence="3">50S ribosomal protein L17</fullName>
    </alternativeName>
</protein>